<sequence>MTLEQKLDRIVLRAEELRAMLAAGVDGERFVAASRELAEIEPVEQQILLLRAAERARDEAEAARADPELRELADAELDSLRETLPRLEHEIRLALLPRDAADERPAILEIRPAAGGDEAALFAAELFAAYRRYADLRGWRFEILDYTETELGGLREGIAEITGRAVFARLKFESGVHRVQRVPATETQGRIHTSTVTVAVLPEAEDVDVEVNEADLRIDVFRASGAGGQHVNKTESAVRITHLPTGIVVAMQEERSQHKNRAKAMKILRARLYEQTRAAAAAGRAADRKSQVGTGDRSERIRTYNFPQGRVTDHRINLTLHKIDRVMLGEFDEIIDALTEEDQAARLAAAGA</sequence>
<reference key="1">
    <citation type="submission" date="2007-05" db="EMBL/GenBank/DDBJ databases">
        <title>Complete sequence of chromosome of Acidiphilium cryptum JF-5.</title>
        <authorList>
            <consortium name="US DOE Joint Genome Institute"/>
            <person name="Copeland A."/>
            <person name="Lucas S."/>
            <person name="Lapidus A."/>
            <person name="Barry K."/>
            <person name="Detter J.C."/>
            <person name="Glavina del Rio T."/>
            <person name="Hammon N."/>
            <person name="Israni S."/>
            <person name="Dalin E."/>
            <person name="Tice H."/>
            <person name="Pitluck S."/>
            <person name="Sims D."/>
            <person name="Brettin T."/>
            <person name="Bruce D."/>
            <person name="Han C."/>
            <person name="Schmutz J."/>
            <person name="Larimer F."/>
            <person name="Land M."/>
            <person name="Hauser L."/>
            <person name="Kyrpides N."/>
            <person name="Kim E."/>
            <person name="Magnuson T."/>
            <person name="Richardson P."/>
        </authorList>
    </citation>
    <scope>NUCLEOTIDE SEQUENCE [LARGE SCALE GENOMIC DNA]</scope>
    <source>
        <strain>JF-5</strain>
    </source>
</reference>
<accession>A5FX99</accession>
<evidence type="ECO:0000255" key="1">
    <source>
        <dbReference type="HAMAP-Rule" id="MF_00093"/>
    </source>
</evidence>
<dbReference type="EMBL" id="CP000697">
    <property type="protein sequence ID" value="ABQ30231.1"/>
    <property type="molecule type" value="Genomic_DNA"/>
</dbReference>
<dbReference type="RefSeq" id="WP_011941928.1">
    <property type="nucleotide sequence ID" value="NC_009484.1"/>
</dbReference>
<dbReference type="SMR" id="A5FX99"/>
<dbReference type="STRING" id="349163.Acry_1014"/>
<dbReference type="KEGG" id="acr:Acry_1014"/>
<dbReference type="eggNOG" id="COG0216">
    <property type="taxonomic scope" value="Bacteria"/>
</dbReference>
<dbReference type="HOGENOM" id="CLU_036856_0_8_5"/>
<dbReference type="Proteomes" id="UP000000245">
    <property type="component" value="Chromosome"/>
</dbReference>
<dbReference type="GO" id="GO:0005737">
    <property type="term" value="C:cytoplasm"/>
    <property type="evidence" value="ECO:0007669"/>
    <property type="project" value="UniProtKB-SubCell"/>
</dbReference>
<dbReference type="GO" id="GO:0016149">
    <property type="term" value="F:translation release factor activity, codon specific"/>
    <property type="evidence" value="ECO:0007669"/>
    <property type="project" value="UniProtKB-UniRule"/>
</dbReference>
<dbReference type="FunFam" id="3.30.160.20:FF:000004">
    <property type="entry name" value="Peptide chain release factor 1"/>
    <property type="match status" value="1"/>
</dbReference>
<dbReference type="FunFam" id="3.30.70.1660:FF:000002">
    <property type="entry name" value="Peptide chain release factor 1"/>
    <property type="match status" value="1"/>
</dbReference>
<dbReference type="FunFam" id="3.30.70.1660:FF:000004">
    <property type="entry name" value="Peptide chain release factor 1"/>
    <property type="match status" value="1"/>
</dbReference>
<dbReference type="Gene3D" id="3.30.160.20">
    <property type="match status" value="1"/>
</dbReference>
<dbReference type="Gene3D" id="3.30.70.1660">
    <property type="match status" value="1"/>
</dbReference>
<dbReference type="Gene3D" id="6.10.140.1950">
    <property type="match status" value="1"/>
</dbReference>
<dbReference type="HAMAP" id="MF_00093">
    <property type="entry name" value="Rel_fac_1"/>
    <property type="match status" value="1"/>
</dbReference>
<dbReference type="InterPro" id="IPR005139">
    <property type="entry name" value="PCRF"/>
</dbReference>
<dbReference type="InterPro" id="IPR000352">
    <property type="entry name" value="Pep_chain_release_fac_I"/>
</dbReference>
<dbReference type="InterPro" id="IPR045853">
    <property type="entry name" value="Pep_chain_release_fac_I_sf"/>
</dbReference>
<dbReference type="InterPro" id="IPR050057">
    <property type="entry name" value="Prokaryotic/Mito_RF"/>
</dbReference>
<dbReference type="InterPro" id="IPR004373">
    <property type="entry name" value="RF-1"/>
</dbReference>
<dbReference type="NCBIfam" id="TIGR00019">
    <property type="entry name" value="prfA"/>
    <property type="match status" value="1"/>
</dbReference>
<dbReference type="NCBIfam" id="NF001859">
    <property type="entry name" value="PRK00591.1"/>
    <property type="match status" value="1"/>
</dbReference>
<dbReference type="PANTHER" id="PTHR43804">
    <property type="entry name" value="LD18447P"/>
    <property type="match status" value="1"/>
</dbReference>
<dbReference type="PANTHER" id="PTHR43804:SF7">
    <property type="entry name" value="LD18447P"/>
    <property type="match status" value="1"/>
</dbReference>
<dbReference type="Pfam" id="PF03462">
    <property type="entry name" value="PCRF"/>
    <property type="match status" value="1"/>
</dbReference>
<dbReference type="Pfam" id="PF00472">
    <property type="entry name" value="RF-1"/>
    <property type="match status" value="1"/>
</dbReference>
<dbReference type="SMART" id="SM00937">
    <property type="entry name" value="PCRF"/>
    <property type="match status" value="1"/>
</dbReference>
<dbReference type="SUPFAM" id="SSF75620">
    <property type="entry name" value="Release factor"/>
    <property type="match status" value="1"/>
</dbReference>
<dbReference type="PROSITE" id="PS00745">
    <property type="entry name" value="RF_PROK_I"/>
    <property type="match status" value="1"/>
</dbReference>
<protein>
    <recommendedName>
        <fullName evidence="1">Peptide chain release factor 1</fullName>
        <shortName evidence="1">RF-1</shortName>
    </recommendedName>
</protein>
<comment type="function">
    <text evidence="1">Peptide chain release factor 1 directs the termination of translation in response to the peptide chain termination codons UAG and UAA.</text>
</comment>
<comment type="subcellular location">
    <subcellularLocation>
        <location evidence="1">Cytoplasm</location>
    </subcellularLocation>
</comment>
<comment type="PTM">
    <text evidence="1">Methylated by PrmC. Methylation increases the termination efficiency of RF1.</text>
</comment>
<comment type="similarity">
    <text evidence="1">Belongs to the prokaryotic/mitochondrial release factor family.</text>
</comment>
<organism>
    <name type="scientific">Acidiphilium cryptum (strain JF-5)</name>
    <dbReference type="NCBI Taxonomy" id="349163"/>
    <lineage>
        <taxon>Bacteria</taxon>
        <taxon>Pseudomonadati</taxon>
        <taxon>Pseudomonadota</taxon>
        <taxon>Alphaproteobacteria</taxon>
        <taxon>Acetobacterales</taxon>
        <taxon>Acidocellaceae</taxon>
        <taxon>Acidiphilium</taxon>
    </lineage>
</organism>
<keyword id="KW-0963">Cytoplasm</keyword>
<keyword id="KW-0488">Methylation</keyword>
<keyword id="KW-0648">Protein biosynthesis</keyword>
<keyword id="KW-1185">Reference proteome</keyword>
<proteinExistence type="inferred from homology"/>
<gene>
    <name evidence="1" type="primary">prfA</name>
    <name type="ordered locus">Acry_1014</name>
</gene>
<feature type="chain" id="PRO_1000004853" description="Peptide chain release factor 1">
    <location>
        <begin position="1"/>
        <end position="352"/>
    </location>
</feature>
<feature type="modified residue" description="N5-methylglutamine" evidence="1">
    <location>
        <position position="229"/>
    </location>
</feature>
<name>RF1_ACICJ</name>